<name>APAH_ACTSZ</name>
<reference key="1">
    <citation type="journal article" date="2010" name="BMC Genomics">
        <title>A genomic perspective on the potential of Actinobacillus succinogenes for industrial succinate production.</title>
        <authorList>
            <person name="McKinlay J.B."/>
            <person name="Laivenieks M."/>
            <person name="Schindler B.D."/>
            <person name="McKinlay A.A."/>
            <person name="Siddaramappa S."/>
            <person name="Challacombe J.F."/>
            <person name="Lowry S.R."/>
            <person name="Clum A."/>
            <person name="Lapidus A.L."/>
            <person name="Burkhart K.B."/>
            <person name="Harkins V."/>
            <person name="Vieille C."/>
        </authorList>
    </citation>
    <scope>NUCLEOTIDE SEQUENCE [LARGE SCALE GENOMIC DNA]</scope>
    <source>
        <strain>ATCC 55618 / DSM 22257 / CCUG 43843 / 130Z</strain>
    </source>
</reference>
<protein>
    <recommendedName>
        <fullName evidence="1">Bis(5'-nucleosyl)-tetraphosphatase, symmetrical</fullName>
        <ecNumber evidence="1">3.6.1.41</ecNumber>
    </recommendedName>
    <alternativeName>
        <fullName evidence="1">Ap4A hydrolase</fullName>
    </alternativeName>
    <alternativeName>
        <fullName evidence="1">Diadenosine 5',5'''-P1,P4-tetraphosphate pyrophosphohydrolase</fullName>
    </alternativeName>
    <alternativeName>
        <fullName evidence="1">Diadenosine tetraphosphatase</fullName>
    </alternativeName>
</protein>
<comment type="function">
    <text evidence="1">Hydrolyzes diadenosine 5',5'''-P1,P4-tetraphosphate to yield ADP.</text>
</comment>
<comment type="catalytic activity">
    <reaction evidence="1">
        <text>P(1),P(4)-bis(5'-adenosyl) tetraphosphate + H2O = 2 ADP + 2 H(+)</text>
        <dbReference type="Rhea" id="RHEA:24252"/>
        <dbReference type="ChEBI" id="CHEBI:15377"/>
        <dbReference type="ChEBI" id="CHEBI:15378"/>
        <dbReference type="ChEBI" id="CHEBI:58141"/>
        <dbReference type="ChEBI" id="CHEBI:456216"/>
        <dbReference type="EC" id="3.6.1.41"/>
    </reaction>
</comment>
<comment type="similarity">
    <text evidence="1">Belongs to the Ap4A hydrolase family.</text>
</comment>
<evidence type="ECO:0000255" key="1">
    <source>
        <dbReference type="HAMAP-Rule" id="MF_00199"/>
    </source>
</evidence>
<dbReference type="EC" id="3.6.1.41" evidence="1"/>
<dbReference type="EMBL" id="CP000746">
    <property type="protein sequence ID" value="ABR74106.1"/>
    <property type="molecule type" value="Genomic_DNA"/>
</dbReference>
<dbReference type="RefSeq" id="WP_012072485.1">
    <property type="nucleotide sequence ID" value="NC_009655.1"/>
</dbReference>
<dbReference type="SMR" id="A6VMA9"/>
<dbReference type="STRING" id="339671.Asuc_0734"/>
<dbReference type="KEGG" id="asu:Asuc_0734"/>
<dbReference type="eggNOG" id="COG0639">
    <property type="taxonomic scope" value="Bacteria"/>
</dbReference>
<dbReference type="HOGENOM" id="CLU_056184_2_0_6"/>
<dbReference type="OrthoDB" id="9807890at2"/>
<dbReference type="Proteomes" id="UP000001114">
    <property type="component" value="Chromosome"/>
</dbReference>
<dbReference type="GO" id="GO:0008803">
    <property type="term" value="F:bis(5'-nucleosyl)-tetraphosphatase (symmetrical) activity"/>
    <property type="evidence" value="ECO:0007669"/>
    <property type="project" value="UniProtKB-UniRule"/>
</dbReference>
<dbReference type="CDD" id="cd07422">
    <property type="entry name" value="MPP_ApaH"/>
    <property type="match status" value="1"/>
</dbReference>
<dbReference type="Gene3D" id="3.60.21.10">
    <property type="match status" value="1"/>
</dbReference>
<dbReference type="HAMAP" id="MF_00199">
    <property type="entry name" value="ApaH"/>
    <property type="match status" value="1"/>
</dbReference>
<dbReference type="InterPro" id="IPR004617">
    <property type="entry name" value="ApaH"/>
</dbReference>
<dbReference type="InterPro" id="IPR004843">
    <property type="entry name" value="Calcineurin-like_PHP_ApaH"/>
</dbReference>
<dbReference type="InterPro" id="IPR029052">
    <property type="entry name" value="Metallo-depent_PP-like"/>
</dbReference>
<dbReference type="NCBIfam" id="TIGR00668">
    <property type="entry name" value="apaH"/>
    <property type="match status" value="1"/>
</dbReference>
<dbReference type="NCBIfam" id="NF001204">
    <property type="entry name" value="PRK00166.1"/>
    <property type="match status" value="1"/>
</dbReference>
<dbReference type="PANTHER" id="PTHR40942">
    <property type="match status" value="1"/>
</dbReference>
<dbReference type="PANTHER" id="PTHR40942:SF4">
    <property type="entry name" value="CYTOCHROME C5"/>
    <property type="match status" value="1"/>
</dbReference>
<dbReference type="Pfam" id="PF00149">
    <property type="entry name" value="Metallophos"/>
    <property type="match status" value="1"/>
</dbReference>
<dbReference type="PIRSF" id="PIRSF000903">
    <property type="entry name" value="B5n-ttraPtase_sm"/>
    <property type="match status" value="1"/>
</dbReference>
<dbReference type="SUPFAM" id="SSF56300">
    <property type="entry name" value="Metallo-dependent phosphatases"/>
    <property type="match status" value="1"/>
</dbReference>
<gene>
    <name evidence="1" type="primary">apaH</name>
    <name type="ordered locus">Asuc_0734</name>
</gene>
<keyword id="KW-0378">Hydrolase</keyword>
<keyword id="KW-1185">Reference proteome</keyword>
<proteinExistence type="inferred from homology"/>
<sequence>MSTYFVGDLHGCFDELQKLLERVRFDPVKDKLYFTGDLIARGEKSLECLRFVKNLGTSAQTVLGNHDLHLLACAYGIKKVKTRDNLTALFAAPDFDELMDWLRQQPLLVHNDHFNFSLVHAGISPDWDMATAQACAREVEAVLRQGDYRALLRQMYDSRPERWSSDLQGIERLRYSINVFTRMRFCYADHRLDFDCKLPLEQAPSELMPWFACDNPLFKTENIIFGHWASLVDCPTPGNIYALDTGCAWGNRMTLLRWDDKRIFSQSAVKKTGVF</sequence>
<organism>
    <name type="scientific">Actinobacillus succinogenes (strain ATCC 55618 / DSM 22257 / CCUG 43843 / 130Z)</name>
    <dbReference type="NCBI Taxonomy" id="339671"/>
    <lineage>
        <taxon>Bacteria</taxon>
        <taxon>Pseudomonadati</taxon>
        <taxon>Pseudomonadota</taxon>
        <taxon>Gammaproteobacteria</taxon>
        <taxon>Pasteurellales</taxon>
        <taxon>Pasteurellaceae</taxon>
        <taxon>Actinobacillus</taxon>
    </lineage>
</organism>
<accession>A6VMA9</accession>
<feature type="chain" id="PRO_1000071718" description="Bis(5'-nucleosyl)-tetraphosphatase, symmetrical">
    <location>
        <begin position="1"/>
        <end position="275"/>
    </location>
</feature>